<sequence length="406" mass="44504">MTFPVEKVRADFPILQREVNGLPLAYLDSAASAQKPNQVIDAESAFYRHGYAAVHRGIHTLSAQATESMENVRKQASRFINARSAEELVFVRGTTEGINLVANSWGTENIRAGDNIIISEMEHHANIVPWQMLCERKGAELRVIPLHPDGTLRLETLAALFDDRTRLLAITHVSNVLGTENPLPDMIALARQHGAKVLVDGAQAVMHHAVDVQALDCDFYVFSGHKLYGPTGIGILYVKEALLQEMPPWEGGGSMISTVSLTQGTTWAKAPWRFEAGTPNTGGIIGLGAAIDYVTSLGLDKIGDYEQMLMRYALEQLAQVPDITLYGPAQRLGVIAFNLGKHHAYDVGSFLDNYGIAVRTGHHCAMPLMAWYGVPAMCRASLAMYNTHEEVDRLVAGLTRIHRLLG</sequence>
<keyword id="KW-0963">Cytoplasm</keyword>
<keyword id="KW-0456">Lyase</keyword>
<keyword id="KW-0663">Pyridoxal phosphate</keyword>
<keyword id="KW-0808">Transferase</keyword>
<evidence type="ECO:0000255" key="1">
    <source>
        <dbReference type="HAMAP-Rule" id="MF_01831"/>
    </source>
</evidence>
<accession>B4TGK9</accession>
<gene>
    <name evidence="1" type="primary">sufS</name>
    <name type="ordered locus">SeHA_C1505</name>
</gene>
<dbReference type="EC" id="2.8.1.7" evidence="1"/>
<dbReference type="EC" id="4.4.1.16" evidence="1"/>
<dbReference type="EMBL" id="CP001120">
    <property type="protein sequence ID" value="ACF69696.1"/>
    <property type="molecule type" value="Genomic_DNA"/>
</dbReference>
<dbReference type="RefSeq" id="WP_000143859.1">
    <property type="nucleotide sequence ID" value="NC_011083.1"/>
</dbReference>
<dbReference type="SMR" id="B4TGK9"/>
<dbReference type="KEGG" id="seh:SeHA_C1505"/>
<dbReference type="HOGENOM" id="CLU_003433_2_5_6"/>
<dbReference type="UniPathway" id="UPA00266"/>
<dbReference type="Proteomes" id="UP000001866">
    <property type="component" value="Chromosome"/>
</dbReference>
<dbReference type="GO" id="GO:0005737">
    <property type="term" value="C:cytoplasm"/>
    <property type="evidence" value="ECO:0007669"/>
    <property type="project" value="UniProtKB-SubCell"/>
</dbReference>
<dbReference type="GO" id="GO:0031071">
    <property type="term" value="F:cysteine desulfurase activity"/>
    <property type="evidence" value="ECO:0007669"/>
    <property type="project" value="UniProtKB-UniRule"/>
</dbReference>
<dbReference type="GO" id="GO:0030170">
    <property type="term" value="F:pyridoxal phosphate binding"/>
    <property type="evidence" value="ECO:0007669"/>
    <property type="project" value="InterPro"/>
</dbReference>
<dbReference type="GO" id="GO:0009000">
    <property type="term" value="F:selenocysteine lyase activity"/>
    <property type="evidence" value="ECO:0007669"/>
    <property type="project" value="UniProtKB-UniRule"/>
</dbReference>
<dbReference type="GO" id="GO:0006534">
    <property type="term" value="P:cysteine metabolic process"/>
    <property type="evidence" value="ECO:0007669"/>
    <property type="project" value="InterPro"/>
</dbReference>
<dbReference type="CDD" id="cd06453">
    <property type="entry name" value="SufS_like"/>
    <property type="match status" value="1"/>
</dbReference>
<dbReference type="FunFam" id="3.40.640.10:FF:000042">
    <property type="entry name" value="Cysteine desulfurase"/>
    <property type="match status" value="1"/>
</dbReference>
<dbReference type="Gene3D" id="3.90.1150.10">
    <property type="entry name" value="Aspartate Aminotransferase, domain 1"/>
    <property type="match status" value="1"/>
</dbReference>
<dbReference type="Gene3D" id="3.40.640.10">
    <property type="entry name" value="Type I PLP-dependent aspartate aminotransferase-like (Major domain)"/>
    <property type="match status" value="1"/>
</dbReference>
<dbReference type="HAMAP" id="MF_01831">
    <property type="entry name" value="SufS_aminotrans_5"/>
    <property type="match status" value="1"/>
</dbReference>
<dbReference type="InterPro" id="IPR000192">
    <property type="entry name" value="Aminotrans_V_dom"/>
</dbReference>
<dbReference type="InterPro" id="IPR020578">
    <property type="entry name" value="Aminotrans_V_PyrdxlP_BS"/>
</dbReference>
<dbReference type="InterPro" id="IPR010970">
    <property type="entry name" value="Cys_dSase_SufS"/>
</dbReference>
<dbReference type="InterPro" id="IPR015424">
    <property type="entry name" value="PyrdxlP-dep_Trfase"/>
</dbReference>
<dbReference type="InterPro" id="IPR015421">
    <property type="entry name" value="PyrdxlP-dep_Trfase_major"/>
</dbReference>
<dbReference type="InterPro" id="IPR015422">
    <property type="entry name" value="PyrdxlP-dep_Trfase_small"/>
</dbReference>
<dbReference type="NCBIfam" id="NF006791">
    <property type="entry name" value="PRK09295.1"/>
    <property type="match status" value="1"/>
</dbReference>
<dbReference type="NCBIfam" id="TIGR01979">
    <property type="entry name" value="sufS"/>
    <property type="match status" value="1"/>
</dbReference>
<dbReference type="PANTHER" id="PTHR43586">
    <property type="entry name" value="CYSTEINE DESULFURASE"/>
    <property type="match status" value="1"/>
</dbReference>
<dbReference type="PANTHER" id="PTHR43586:SF25">
    <property type="entry name" value="CYSTEINE DESULFURASE"/>
    <property type="match status" value="1"/>
</dbReference>
<dbReference type="Pfam" id="PF00266">
    <property type="entry name" value="Aminotran_5"/>
    <property type="match status" value="1"/>
</dbReference>
<dbReference type="SUPFAM" id="SSF53383">
    <property type="entry name" value="PLP-dependent transferases"/>
    <property type="match status" value="1"/>
</dbReference>
<dbReference type="PROSITE" id="PS00595">
    <property type="entry name" value="AA_TRANSFER_CLASS_5"/>
    <property type="match status" value="1"/>
</dbReference>
<organism>
    <name type="scientific">Salmonella heidelberg (strain SL476)</name>
    <dbReference type="NCBI Taxonomy" id="454169"/>
    <lineage>
        <taxon>Bacteria</taxon>
        <taxon>Pseudomonadati</taxon>
        <taxon>Pseudomonadota</taxon>
        <taxon>Gammaproteobacteria</taxon>
        <taxon>Enterobacterales</taxon>
        <taxon>Enterobacteriaceae</taxon>
        <taxon>Salmonella</taxon>
    </lineage>
</organism>
<protein>
    <recommendedName>
        <fullName evidence="1">Cysteine desulfurase</fullName>
        <ecNumber evidence="1">2.8.1.7</ecNumber>
    </recommendedName>
    <alternativeName>
        <fullName evidence="1">Selenocysteine beta-lyase</fullName>
        <shortName evidence="1">SCL</shortName>
    </alternativeName>
    <alternativeName>
        <fullName evidence="1">Selenocysteine lyase</fullName>
        <ecNumber evidence="1">4.4.1.16</ecNumber>
    </alternativeName>
    <alternativeName>
        <fullName evidence="1">Selenocysteine reductase</fullName>
    </alternativeName>
</protein>
<comment type="function">
    <text evidence="1">Cysteine desulfurases mobilize the sulfur from L-cysteine to yield L-alanine, an essential step in sulfur metabolism for biosynthesis of a variety of sulfur-containing biomolecules. Component of the suf operon, which is activated and required under specific conditions such as oxidative stress and iron limitation. Acts as a potent selenocysteine lyase in vitro, that mobilizes selenium from L-selenocysteine. Selenocysteine lyase activity is however unsure in vivo.</text>
</comment>
<comment type="catalytic activity">
    <reaction evidence="1">
        <text>(sulfur carrier)-H + L-cysteine = (sulfur carrier)-SH + L-alanine</text>
        <dbReference type="Rhea" id="RHEA:43892"/>
        <dbReference type="Rhea" id="RHEA-COMP:14737"/>
        <dbReference type="Rhea" id="RHEA-COMP:14739"/>
        <dbReference type="ChEBI" id="CHEBI:29917"/>
        <dbReference type="ChEBI" id="CHEBI:35235"/>
        <dbReference type="ChEBI" id="CHEBI:57972"/>
        <dbReference type="ChEBI" id="CHEBI:64428"/>
        <dbReference type="EC" id="2.8.1.7"/>
    </reaction>
</comment>
<comment type="catalytic activity">
    <reaction evidence="1">
        <text>L-selenocysteine + AH2 = hydrogenselenide + L-alanine + A + H(+)</text>
        <dbReference type="Rhea" id="RHEA:11632"/>
        <dbReference type="ChEBI" id="CHEBI:13193"/>
        <dbReference type="ChEBI" id="CHEBI:15378"/>
        <dbReference type="ChEBI" id="CHEBI:17499"/>
        <dbReference type="ChEBI" id="CHEBI:29317"/>
        <dbReference type="ChEBI" id="CHEBI:57843"/>
        <dbReference type="ChEBI" id="CHEBI:57972"/>
        <dbReference type="EC" id="4.4.1.16"/>
    </reaction>
</comment>
<comment type="cofactor">
    <cofactor evidence="1">
        <name>pyridoxal 5'-phosphate</name>
        <dbReference type="ChEBI" id="CHEBI:597326"/>
    </cofactor>
</comment>
<comment type="pathway">
    <text evidence="1">Cofactor biosynthesis; iron-sulfur cluster biosynthesis.</text>
</comment>
<comment type="subunit">
    <text evidence="1">Homodimer. Interacts with SufE and the SufBCD complex composed of SufB, SufC and SufD. The interaction with SufE is required to mediate the direct transfer of the sulfur atom from the S-sulfanylcysteine.</text>
</comment>
<comment type="subcellular location">
    <subcellularLocation>
        <location evidence="1">Cytoplasm</location>
    </subcellularLocation>
</comment>
<comment type="similarity">
    <text evidence="1">Belongs to the class-V pyridoxal-phosphate-dependent aminotransferase family. Csd subfamily.</text>
</comment>
<feature type="chain" id="PRO_1000188308" description="Cysteine desulfurase">
    <location>
        <begin position="1"/>
        <end position="406"/>
    </location>
</feature>
<feature type="active site" description="Cysteine persulfide intermediate" evidence="1">
    <location>
        <position position="364"/>
    </location>
</feature>
<feature type="modified residue" description="N6-(pyridoxal phosphate)lysine" evidence="1">
    <location>
        <position position="226"/>
    </location>
</feature>
<name>SUFS_SALHS</name>
<reference key="1">
    <citation type="journal article" date="2011" name="J. Bacteriol.">
        <title>Comparative genomics of 28 Salmonella enterica isolates: evidence for CRISPR-mediated adaptive sublineage evolution.</title>
        <authorList>
            <person name="Fricke W.F."/>
            <person name="Mammel M.K."/>
            <person name="McDermott P.F."/>
            <person name="Tartera C."/>
            <person name="White D.G."/>
            <person name="Leclerc J.E."/>
            <person name="Ravel J."/>
            <person name="Cebula T.A."/>
        </authorList>
    </citation>
    <scope>NUCLEOTIDE SEQUENCE [LARGE SCALE GENOMIC DNA]</scope>
    <source>
        <strain>SL476</strain>
    </source>
</reference>
<proteinExistence type="inferred from homology"/>